<accession>B5QVW1</accession>
<name>BTUC_SALEP</name>
<evidence type="ECO:0000255" key="1">
    <source>
        <dbReference type="HAMAP-Rule" id="MF_01004"/>
    </source>
</evidence>
<proteinExistence type="inferred from homology"/>
<keyword id="KW-0997">Cell inner membrane</keyword>
<keyword id="KW-1003">Cell membrane</keyword>
<keyword id="KW-0472">Membrane</keyword>
<keyword id="KW-0812">Transmembrane</keyword>
<keyword id="KW-1133">Transmembrane helix</keyword>
<keyword id="KW-0813">Transport</keyword>
<comment type="function">
    <text evidence="1">Part of the ABC transporter complex BtuCDF involved in vitamin B12 import. Involved in the translocation of the substrate across the membrane.</text>
</comment>
<comment type="subunit">
    <text evidence="1">The complex is composed of two ATP-binding proteins (BtuD), two transmembrane proteins (BtuC) and a solute-binding protein (BtuF).</text>
</comment>
<comment type="subcellular location">
    <subcellularLocation>
        <location evidence="1">Cell inner membrane</location>
        <topology evidence="1">Multi-pass membrane protein</topology>
    </subcellularLocation>
</comment>
<comment type="similarity">
    <text evidence="1">Belongs to the binding-protein-dependent transport system permease family. FecCD subfamily.</text>
</comment>
<protein>
    <recommendedName>
        <fullName evidence="1">Vitamin B12 import system permease protein BtuC</fullName>
    </recommendedName>
</protein>
<organism>
    <name type="scientific">Salmonella enteritidis PT4 (strain P125109)</name>
    <dbReference type="NCBI Taxonomy" id="550537"/>
    <lineage>
        <taxon>Bacteria</taxon>
        <taxon>Pseudomonadati</taxon>
        <taxon>Pseudomonadota</taxon>
        <taxon>Gammaproteobacteria</taxon>
        <taxon>Enterobacterales</taxon>
        <taxon>Enterobacteriaceae</taxon>
        <taxon>Salmonella</taxon>
    </lineage>
</organism>
<feature type="chain" id="PRO_1000201553" description="Vitamin B12 import system permease protein BtuC">
    <location>
        <begin position="1"/>
        <end position="326"/>
    </location>
</feature>
<feature type="transmembrane region" description="Helical" evidence="1">
    <location>
        <begin position="15"/>
        <end position="35"/>
    </location>
</feature>
<feature type="transmembrane region" description="Helical" evidence="1">
    <location>
        <begin position="61"/>
        <end position="81"/>
    </location>
</feature>
<feature type="transmembrane region" description="Helical" evidence="1">
    <location>
        <begin position="88"/>
        <end position="108"/>
    </location>
</feature>
<feature type="transmembrane region" description="Helical" evidence="1">
    <location>
        <begin position="112"/>
        <end position="132"/>
    </location>
</feature>
<feature type="transmembrane region" description="Helical" evidence="1">
    <location>
        <begin position="146"/>
        <end position="166"/>
    </location>
</feature>
<feature type="transmembrane region" description="Helical" evidence="1">
    <location>
        <begin position="184"/>
        <end position="204"/>
    </location>
</feature>
<feature type="transmembrane region" description="Helical" evidence="1">
    <location>
        <begin position="240"/>
        <end position="260"/>
    </location>
</feature>
<feature type="transmembrane region" description="Helical" evidence="1">
    <location>
        <begin position="274"/>
        <end position="294"/>
    </location>
</feature>
<feature type="transmembrane region" description="Helical" evidence="1">
    <location>
        <begin position="302"/>
        <end position="322"/>
    </location>
</feature>
<reference key="1">
    <citation type="journal article" date="2008" name="Genome Res.">
        <title>Comparative genome analysis of Salmonella enteritidis PT4 and Salmonella gallinarum 287/91 provides insights into evolutionary and host adaptation pathways.</title>
        <authorList>
            <person name="Thomson N.R."/>
            <person name="Clayton D.J."/>
            <person name="Windhorst D."/>
            <person name="Vernikos G."/>
            <person name="Davidson S."/>
            <person name="Churcher C."/>
            <person name="Quail M.A."/>
            <person name="Stevens M."/>
            <person name="Jones M.A."/>
            <person name="Watson M."/>
            <person name="Barron A."/>
            <person name="Layton A."/>
            <person name="Pickard D."/>
            <person name="Kingsley R.A."/>
            <person name="Bignell A."/>
            <person name="Clark L."/>
            <person name="Harris B."/>
            <person name="Ormond D."/>
            <person name="Abdellah Z."/>
            <person name="Brooks K."/>
            <person name="Cherevach I."/>
            <person name="Chillingworth T."/>
            <person name="Woodward J."/>
            <person name="Norberczak H."/>
            <person name="Lord A."/>
            <person name="Arrowsmith C."/>
            <person name="Jagels K."/>
            <person name="Moule S."/>
            <person name="Mungall K."/>
            <person name="Saunders M."/>
            <person name="Whitehead S."/>
            <person name="Chabalgoity J.A."/>
            <person name="Maskell D."/>
            <person name="Humphreys T."/>
            <person name="Roberts M."/>
            <person name="Barrow P.A."/>
            <person name="Dougan G."/>
            <person name="Parkhill J."/>
        </authorList>
    </citation>
    <scope>NUCLEOTIDE SEQUENCE [LARGE SCALE GENOMIC DNA]</scope>
    <source>
        <strain>P125109</strain>
    </source>
</reference>
<gene>
    <name evidence="1" type="primary">btuC</name>
    <name type="ordered locus">SEN1704</name>
</gene>
<dbReference type="EMBL" id="AM933172">
    <property type="protein sequence ID" value="CAR33286.1"/>
    <property type="molecule type" value="Genomic_DNA"/>
</dbReference>
<dbReference type="RefSeq" id="WP_000954982.1">
    <property type="nucleotide sequence ID" value="NC_011294.1"/>
</dbReference>
<dbReference type="SMR" id="B5QVW1"/>
<dbReference type="KEGG" id="set:SEN1704"/>
<dbReference type="HOGENOM" id="CLU_013016_0_3_6"/>
<dbReference type="Proteomes" id="UP000000613">
    <property type="component" value="Chromosome"/>
</dbReference>
<dbReference type="GO" id="GO:0005886">
    <property type="term" value="C:plasma membrane"/>
    <property type="evidence" value="ECO:0007669"/>
    <property type="project" value="UniProtKB-SubCell"/>
</dbReference>
<dbReference type="GO" id="GO:0090482">
    <property type="term" value="F:vitamin transmembrane transporter activity"/>
    <property type="evidence" value="ECO:0007669"/>
    <property type="project" value="UniProtKB-UniRule"/>
</dbReference>
<dbReference type="GO" id="GO:0015889">
    <property type="term" value="P:cobalamin transport"/>
    <property type="evidence" value="ECO:0007669"/>
    <property type="project" value="UniProtKB-UniRule"/>
</dbReference>
<dbReference type="CDD" id="cd06550">
    <property type="entry name" value="TM_ABC_iron-siderophores_like"/>
    <property type="match status" value="1"/>
</dbReference>
<dbReference type="FunFam" id="1.10.3470.10:FF:000001">
    <property type="entry name" value="Vitamin B12 ABC transporter permease BtuC"/>
    <property type="match status" value="1"/>
</dbReference>
<dbReference type="Gene3D" id="1.10.3470.10">
    <property type="entry name" value="ABC transporter involved in vitamin B12 uptake, BtuC"/>
    <property type="match status" value="1"/>
</dbReference>
<dbReference type="HAMAP" id="MF_01004">
    <property type="entry name" value="BtuC"/>
    <property type="match status" value="1"/>
</dbReference>
<dbReference type="InterPro" id="IPR037294">
    <property type="entry name" value="ABC_BtuC-like"/>
</dbReference>
<dbReference type="InterPro" id="IPR023691">
    <property type="entry name" value="ABC_transptr_BtuC"/>
</dbReference>
<dbReference type="InterPro" id="IPR000522">
    <property type="entry name" value="ABC_transptr_permease_BtuC"/>
</dbReference>
<dbReference type="NCBIfam" id="NF003001">
    <property type="entry name" value="PRK03784.1"/>
    <property type="match status" value="1"/>
</dbReference>
<dbReference type="PANTHER" id="PTHR30472">
    <property type="entry name" value="FERRIC ENTEROBACTIN TRANSPORT SYSTEM PERMEASE PROTEIN"/>
    <property type="match status" value="1"/>
</dbReference>
<dbReference type="PANTHER" id="PTHR30472:SF29">
    <property type="entry name" value="VITAMIN B12 IMPORT SYSTEM PERMEASE PROTEIN BTUC"/>
    <property type="match status" value="1"/>
</dbReference>
<dbReference type="Pfam" id="PF01032">
    <property type="entry name" value="FecCD"/>
    <property type="match status" value="1"/>
</dbReference>
<dbReference type="SUPFAM" id="SSF81345">
    <property type="entry name" value="ABC transporter involved in vitamin B12 uptake, BtuC"/>
    <property type="match status" value="1"/>
</dbReference>
<sequence length="326" mass="34898">MLTFARQQQRRNVRWLLSLSLLVLLATLLSLCAGEQWIAPGDWLSARGELFVWQIRLPRTLAVLLVGAALALSGAVMQALFENPLAEPGLLGVSNGAGVGLIAAVLLGQGQLPGWALGLCAIAGALIITLILLRFARRHLSTSRLLLAGVALGIICSALMTWAIYFSTSFDLRQLMYWMMGGFGGVDWQQSWLMIALIPVLIWICCQSQPLNMLALGETSARQLGLPLWFWRNLLVIATGWMVGVSVAMAGAIGFIGLVIPHILRLCGLTDHRVLLPGCALAGAIALLLADVVARLALASAELPIGVVTATLGAPVFIWLLLKSAR</sequence>